<organism>
    <name type="scientific">Polynucleobacter necessarius subsp. necessarius (strain STIR1)</name>
    <dbReference type="NCBI Taxonomy" id="452638"/>
    <lineage>
        <taxon>Bacteria</taxon>
        <taxon>Pseudomonadati</taxon>
        <taxon>Pseudomonadota</taxon>
        <taxon>Betaproteobacteria</taxon>
        <taxon>Burkholderiales</taxon>
        <taxon>Burkholderiaceae</taxon>
        <taxon>Polynucleobacter</taxon>
    </lineage>
</organism>
<keyword id="KW-0963">Cytoplasm</keyword>
<keyword id="KW-0489">Methyltransferase</keyword>
<keyword id="KW-0698">rRNA processing</keyword>
<keyword id="KW-0949">S-adenosyl-L-methionine</keyword>
<keyword id="KW-0808">Transferase</keyword>
<feature type="chain" id="PRO_0000366635" description="Ribosomal RNA large subunit methyltransferase H">
    <location>
        <begin position="1"/>
        <end position="135"/>
    </location>
</feature>
<feature type="binding site" evidence="1">
    <location>
        <position position="52"/>
    </location>
    <ligand>
        <name>S-adenosyl-L-methionine</name>
        <dbReference type="ChEBI" id="CHEBI:59789"/>
    </ligand>
</feature>
<feature type="binding site" evidence="1">
    <location>
        <position position="83"/>
    </location>
    <ligand>
        <name>S-adenosyl-L-methionine</name>
        <dbReference type="ChEBI" id="CHEBI:59789"/>
    </ligand>
</feature>
<feature type="binding site" evidence="1">
    <location>
        <begin position="102"/>
        <end position="107"/>
    </location>
    <ligand>
        <name>S-adenosyl-L-methionine</name>
        <dbReference type="ChEBI" id="CHEBI:59789"/>
    </ligand>
</feature>
<proteinExistence type="inferred from homology"/>
<comment type="function">
    <text evidence="1">Specifically methylates the pseudouridine at position 1915 (m3Psi1915) in 23S rRNA.</text>
</comment>
<comment type="catalytic activity">
    <reaction evidence="1">
        <text>pseudouridine(1915) in 23S rRNA + S-adenosyl-L-methionine = N(3)-methylpseudouridine(1915) in 23S rRNA + S-adenosyl-L-homocysteine + H(+)</text>
        <dbReference type="Rhea" id="RHEA:42752"/>
        <dbReference type="Rhea" id="RHEA-COMP:10221"/>
        <dbReference type="Rhea" id="RHEA-COMP:10222"/>
        <dbReference type="ChEBI" id="CHEBI:15378"/>
        <dbReference type="ChEBI" id="CHEBI:57856"/>
        <dbReference type="ChEBI" id="CHEBI:59789"/>
        <dbReference type="ChEBI" id="CHEBI:65314"/>
        <dbReference type="ChEBI" id="CHEBI:74486"/>
        <dbReference type="EC" id="2.1.1.177"/>
    </reaction>
</comment>
<comment type="subunit">
    <text evidence="1">Homodimer.</text>
</comment>
<comment type="subcellular location">
    <subcellularLocation>
        <location evidence="1">Cytoplasm</location>
    </subcellularLocation>
</comment>
<comment type="similarity">
    <text evidence="1">Belongs to the RNA methyltransferase RlmH family.</text>
</comment>
<gene>
    <name evidence="1" type="primary">rlmH</name>
    <name type="ordered locus">Pnec_1242</name>
</gene>
<protein>
    <recommendedName>
        <fullName evidence="1">Ribosomal RNA large subunit methyltransferase H</fullName>
        <ecNumber evidence="1">2.1.1.177</ecNumber>
    </recommendedName>
    <alternativeName>
        <fullName evidence="1">23S rRNA (pseudouridine1915-N3)-methyltransferase</fullName>
    </alternativeName>
    <alternativeName>
        <fullName evidence="1">23S rRNA m3Psi1915 methyltransferase</fullName>
    </alternativeName>
    <alternativeName>
        <fullName evidence="1">rRNA (pseudouridine-N3-)-methyltransferase RlmH</fullName>
    </alternativeName>
</protein>
<sequence>MRLTIVSVGHKMPDWVATATIEIKEIKPDLTLAKEAVKIAAAIPKGSRVIALDERGKDQTTQNLATQLASWRQEGFDITFLIGGADGLDPSLKTTAQAIWRLSSLTLPHAMARVLLVEQLYRAWTILQGHPYHRE</sequence>
<name>RLMH_POLNS</name>
<dbReference type="EC" id="2.1.1.177" evidence="1"/>
<dbReference type="EMBL" id="CP001010">
    <property type="protein sequence ID" value="ACB44377.1"/>
    <property type="molecule type" value="Genomic_DNA"/>
</dbReference>
<dbReference type="SMR" id="B1XVK0"/>
<dbReference type="STRING" id="452638.Pnec_1242"/>
<dbReference type="KEGG" id="pne:Pnec_1242"/>
<dbReference type="eggNOG" id="COG1576">
    <property type="taxonomic scope" value="Bacteria"/>
</dbReference>
<dbReference type="HOGENOM" id="CLU_100552_1_0_4"/>
<dbReference type="OrthoDB" id="9806643at2"/>
<dbReference type="GO" id="GO:0005737">
    <property type="term" value="C:cytoplasm"/>
    <property type="evidence" value="ECO:0007669"/>
    <property type="project" value="UniProtKB-SubCell"/>
</dbReference>
<dbReference type="GO" id="GO:0070038">
    <property type="term" value="F:rRNA (pseudouridine-N3-)-methyltransferase activity"/>
    <property type="evidence" value="ECO:0007669"/>
    <property type="project" value="UniProtKB-UniRule"/>
</dbReference>
<dbReference type="CDD" id="cd18081">
    <property type="entry name" value="RlmH-like"/>
    <property type="match status" value="1"/>
</dbReference>
<dbReference type="Gene3D" id="3.40.1280.10">
    <property type="match status" value="1"/>
</dbReference>
<dbReference type="HAMAP" id="MF_00658">
    <property type="entry name" value="23SrRNA_methyltr_H"/>
    <property type="match status" value="1"/>
</dbReference>
<dbReference type="InterPro" id="IPR029028">
    <property type="entry name" value="Alpha/beta_knot_MTases"/>
</dbReference>
<dbReference type="InterPro" id="IPR003742">
    <property type="entry name" value="RlmH-like"/>
</dbReference>
<dbReference type="InterPro" id="IPR029026">
    <property type="entry name" value="tRNA_m1G_MTases_N"/>
</dbReference>
<dbReference type="NCBIfam" id="NF000986">
    <property type="entry name" value="PRK00103.1-4"/>
    <property type="match status" value="1"/>
</dbReference>
<dbReference type="PANTHER" id="PTHR33603">
    <property type="entry name" value="METHYLTRANSFERASE"/>
    <property type="match status" value="1"/>
</dbReference>
<dbReference type="PANTHER" id="PTHR33603:SF1">
    <property type="entry name" value="RIBOSOMAL RNA LARGE SUBUNIT METHYLTRANSFERASE H"/>
    <property type="match status" value="1"/>
</dbReference>
<dbReference type="Pfam" id="PF02590">
    <property type="entry name" value="SPOUT_MTase"/>
    <property type="match status" value="1"/>
</dbReference>
<dbReference type="PIRSF" id="PIRSF004505">
    <property type="entry name" value="MT_bac"/>
    <property type="match status" value="1"/>
</dbReference>
<dbReference type="SUPFAM" id="SSF75217">
    <property type="entry name" value="alpha/beta knot"/>
    <property type="match status" value="1"/>
</dbReference>
<accession>B1XVK0</accession>
<reference key="1">
    <citation type="journal article" date="2013" name="Proc. Natl. Acad. Sci. U.S.A.">
        <title>Polynucleobacter necessarius, a model for genome reduction in both free-living and symbiotic bacteria.</title>
        <authorList>
            <person name="Boscaro V."/>
            <person name="Felletti M."/>
            <person name="Vannini C."/>
            <person name="Ackerman M.S."/>
            <person name="Chain P.S."/>
            <person name="Malfatti S."/>
            <person name="Vergez L.M."/>
            <person name="Shin M."/>
            <person name="Doak T.G."/>
            <person name="Lynch M."/>
            <person name="Petroni G."/>
        </authorList>
    </citation>
    <scope>NUCLEOTIDE SEQUENCE [LARGE SCALE GENOMIC DNA]</scope>
    <source>
        <strain>STIR1</strain>
    </source>
</reference>
<evidence type="ECO:0000255" key="1">
    <source>
        <dbReference type="HAMAP-Rule" id="MF_00658"/>
    </source>
</evidence>